<organism>
    <name type="scientific">Pisum sativum</name>
    <name type="common">Garden pea</name>
    <name type="synonym">Lathyrus oleraceus</name>
    <dbReference type="NCBI Taxonomy" id="3888"/>
    <lineage>
        <taxon>Eukaryota</taxon>
        <taxon>Viridiplantae</taxon>
        <taxon>Streptophyta</taxon>
        <taxon>Embryophyta</taxon>
        <taxon>Tracheophyta</taxon>
        <taxon>Spermatophyta</taxon>
        <taxon>Magnoliopsida</taxon>
        <taxon>eudicotyledons</taxon>
        <taxon>Gunneridae</taxon>
        <taxon>Pentapetalae</taxon>
        <taxon>rosids</taxon>
        <taxon>fabids</taxon>
        <taxon>Fabales</taxon>
        <taxon>Fabaceae</taxon>
        <taxon>Papilionoideae</taxon>
        <taxon>50 kb inversion clade</taxon>
        <taxon>NPAAA clade</taxon>
        <taxon>Hologalegina</taxon>
        <taxon>IRL clade</taxon>
        <taxon>Fabeae</taxon>
        <taxon>Pisum</taxon>
    </lineage>
</organism>
<keyword id="KW-0021">Allosteric enzyme</keyword>
<keyword id="KW-0120">Carbon dioxide fixation</keyword>
<keyword id="KW-0963">Cytoplasm</keyword>
<keyword id="KW-0456">Lyase</keyword>
<keyword id="KW-0460">Magnesium</keyword>
<keyword id="KW-0597">Phosphoprotein</keyword>
<keyword id="KW-0602">Photosynthesis</keyword>
<evidence type="ECO:0000250" key="1"/>
<evidence type="ECO:0000256" key="2">
    <source>
        <dbReference type="SAM" id="MobiDB-lite"/>
    </source>
</evidence>
<evidence type="ECO:0000305" key="3"/>
<feature type="chain" id="PRO_0000166673" description="Phosphoenolpyruvate carboxylase">
    <location>
        <begin position="1"/>
        <end position="967"/>
    </location>
</feature>
<feature type="region of interest" description="Disordered" evidence="2">
    <location>
        <begin position="915"/>
        <end position="936"/>
    </location>
</feature>
<feature type="compositionally biased region" description="Basic and acidic residues" evidence="2">
    <location>
        <begin position="924"/>
        <end position="933"/>
    </location>
</feature>
<feature type="active site" evidence="1">
    <location>
        <position position="171"/>
    </location>
</feature>
<feature type="active site" evidence="1">
    <location>
        <position position="601"/>
    </location>
</feature>
<feature type="modified residue" description="Phosphoserine" evidence="1">
    <location>
        <position position="10"/>
    </location>
</feature>
<accession>P51062</accession>
<comment type="function">
    <text>Through the carboxylation of phosphoenolpyruvate (PEP) it forms oxaloacetate, a four-carbon dicarboxylic acid source for the tricarboxylic acid cycle.</text>
</comment>
<comment type="catalytic activity">
    <reaction>
        <text>oxaloacetate + phosphate = phosphoenolpyruvate + hydrogencarbonate</text>
        <dbReference type="Rhea" id="RHEA:28370"/>
        <dbReference type="ChEBI" id="CHEBI:16452"/>
        <dbReference type="ChEBI" id="CHEBI:17544"/>
        <dbReference type="ChEBI" id="CHEBI:43474"/>
        <dbReference type="ChEBI" id="CHEBI:58702"/>
        <dbReference type="EC" id="4.1.1.31"/>
    </reaction>
</comment>
<comment type="cofactor">
    <cofactor evidence="1">
        <name>Mg(2+)</name>
        <dbReference type="ChEBI" id="CHEBI:18420"/>
    </cofactor>
</comment>
<comment type="activity regulation">
    <text evidence="1">By light-reversible phosphorylation.</text>
</comment>
<comment type="subunit">
    <text evidence="1">Homotetramer.</text>
</comment>
<comment type="subcellular location">
    <subcellularLocation>
        <location evidence="1">Cytoplasm</location>
    </subcellularLocation>
</comment>
<comment type="similarity">
    <text evidence="3">Belongs to the PEPCase type 1 family.</text>
</comment>
<proteinExistence type="evidence at transcript level"/>
<sequence>MANKMEKMASIDAQLRQLAPAKVSEDDKLIEYDALLLDRFLDILQDLHGEDLKDSVQEVYELSAEYERKHDPKKLEELGKLITGLDAGDSIVVAKSFSHMLNLANLAEEVQIAHRRRNKLKKGDFRDESNATTESDIEETLKKLVFNMKKSPQEVFDALKNQTVDLVLTAHPTQSVRRSLLQKHARVRNCLSQLYAKDITPDDKQELDESLQREIQAAFRTDEIKRTPPTPQDEMRAGMSYFHETIWKGVPKFLRRVDTALKNIGINERVPYNAPLIQFSSWMGGDRDGNPRVTPEVTRDVCLLARMMAANLYYSQIEDLMFELSMWRCNDELRDRAEELHRNSKKDEVAKHYIEFWKKVPLNEPYRVILGHVRDKLYRTRERSRYLLAHGYSDIPEEDTFTNFDEFLEPLELCYRSLCFCGDRAIADGSLLDFLRQVSTFGLSLVRLDIRQESDRHTDVMDAITKHLEIGSYQEWSEEKRQEWLLSELVGKRPLFGPDLPTTDEIRDVLDTFHVIAELPSDNFGAYIISMATAPSDVLAVELLQRECKIKNPLRVVPLFEKLADLEAAPAALARLFSIDWYRNRIDGKQEVMIGYSDSGKDAGRFSAAWQLYKAQEELINVAQKFSVKLTMFHGRGGTVGRGGGPTHLAILSQPPDTIHGSLRVTVQGEVIEQSFGEEHLCFRTLQRFTAATLEHGMRPPSSPKPEWRALMDQMAIIATEEYRSIVFKEPRFVEYFRLATPEMEYGRMNIGSRPAKRRPSGGIETLRAIPWIFPWTQTRFHLPVWLGFGSAFKQVIEKDVKNLHMLQDMYNQWPFFRVTIDLVEMVFAKGDPGIAALNDRLLVSQNLWPFGEQLRNKYEETKKLLLQVATHKEVLEGDPYLKQRLRLRDSYITTLNVFQAYTLKRIRDPKSSVNASRLPLSRESPEATKPADELVTLNPTSEYAPGLEDTLILTMKGIAAGMQNTG</sequence>
<dbReference type="EC" id="4.1.1.31"/>
<dbReference type="EMBL" id="D64037">
    <property type="protein sequence ID" value="BAA10902.1"/>
    <property type="molecule type" value="mRNA"/>
</dbReference>
<dbReference type="SMR" id="P51062"/>
<dbReference type="GO" id="GO:0048046">
    <property type="term" value="C:apoplast"/>
    <property type="evidence" value="ECO:0007669"/>
    <property type="project" value="TreeGrafter"/>
</dbReference>
<dbReference type="GO" id="GO:0009507">
    <property type="term" value="C:chloroplast"/>
    <property type="evidence" value="ECO:0007669"/>
    <property type="project" value="TreeGrafter"/>
</dbReference>
<dbReference type="GO" id="GO:0005829">
    <property type="term" value="C:cytosol"/>
    <property type="evidence" value="ECO:0007669"/>
    <property type="project" value="TreeGrafter"/>
</dbReference>
<dbReference type="GO" id="GO:0008964">
    <property type="term" value="F:phosphoenolpyruvate carboxylase activity"/>
    <property type="evidence" value="ECO:0007669"/>
    <property type="project" value="UniProtKB-EC"/>
</dbReference>
<dbReference type="GO" id="GO:0015977">
    <property type="term" value="P:carbon fixation"/>
    <property type="evidence" value="ECO:0007669"/>
    <property type="project" value="UniProtKB-KW"/>
</dbReference>
<dbReference type="GO" id="GO:0048366">
    <property type="term" value="P:leaf development"/>
    <property type="evidence" value="ECO:0007669"/>
    <property type="project" value="TreeGrafter"/>
</dbReference>
<dbReference type="GO" id="GO:0015979">
    <property type="term" value="P:photosynthesis"/>
    <property type="evidence" value="ECO:0007669"/>
    <property type="project" value="UniProtKB-KW"/>
</dbReference>
<dbReference type="GO" id="GO:0006099">
    <property type="term" value="P:tricarboxylic acid cycle"/>
    <property type="evidence" value="ECO:0007669"/>
    <property type="project" value="InterPro"/>
</dbReference>
<dbReference type="FunFam" id="1.20.1440.90:FF:000001">
    <property type="entry name" value="Phosphoenolpyruvate carboxylase 1"/>
    <property type="match status" value="1"/>
</dbReference>
<dbReference type="Gene3D" id="1.20.1440.90">
    <property type="entry name" value="Phosphoenolpyruvate/pyruvate domain"/>
    <property type="match status" value="1"/>
</dbReference>
<dbReference type="HAMAP" id="MF_00595">
    <property type="entry name" value="PEPcase_type1"/>
    <property type="match status" value="1"/>
</dbReference>
<dbReference type="InterPro" id="IPR021135">
    <property type="entry name" value="PEP_COase"/>
</dbReference>
<dbReference type="InterPro" id="IPR022805">
    <property type="entry name" value="PEP_COase_bac/pln-type"/>
</dbReference>
<dbReference type="InterPro" id="IPR018129">
    <property type="entry name" value="PEP_COase_Lys_AS"/>
</dbReference>
<dbReference type="InterPro" id="IPR033129">
    <property type="entry name" value="PEPCASE_His_AS"/>
</dbReference>
<dbReference type="InterPro" id="IPR015813">
    <property type="entry name" value="Pyrv/PenolPyrv_kinase-like_dom"/>
</dbReference>
<dbReference type="NCBIfam" id="NF000584">
    <property type="entry name" value="PRK00009.1"/>
    <property type="match status" value="1"/>
</dbReference>
<dbReference type="PANTHER" id="PTHR30523">
    <property type="entry name" value="PHOSPHOENOLPYRUVATE CARBOXYLASE"/>
    <property type="match status" value="1"/>
</dbReference>
<dbReference type="PANTHER" id="PTHR30523:SF37">
    <property type="entry name" value="PHOSPHOENOLPYRUVATE CARBOXYLASE"/>
    <property type="match status" value="1"/>
</dbReference>
<dbReference type="Pfam" id="PF00311">
    <property type="entry name" value="PEPcase"/>
    <property type="match status" value="1"/>
</dbReference>
<dbReference type="PRINTS" id="PR00150">
    <property type="entry name" value="PEPCARBXLASE"/>
</dbReference>
<dbReference type="SUPFAM" id="SSF51621">
    <property type="entry name" value="Phosphoenolpyruvate/pyruvate domain"/>
    <property type="match status" value="1"/>
</dbReference>
<dbReference type="PROSITE" id="PS00781">
    <property type="entry name" value="PEPCASE_1"/>
    <property type="match status" value="1"/>
</dbReference>
<dbReference type="PROSITE" id="PS00393">
    <property type="entry name" value="PEPCASE_2"/>
    <property type="match status" value="1"/>
</dbReference>
<protein>
    <recommendedName>
        <fullName>Phosphoenolpyruvate carboxylase</fullName>
        <shortName>PEPC</shortName>
        <shortName>PEPCase</shortName>
        <ecNumber>4.1.1.31</ecNumber>
    </recommendedName>
</protein>
<name>CAPP_PEA</name>
<reference key="1">
    <citation type="submission" date="1995-09" db="EMBL/GenBank/DDBJ databases">
        <authorList>
            <person name="Suganuma N."/>
            <person name="Okada Y."/>
            <person name="Kanayama Y."/>
        </authorList>
    </citation>
    <scope>NUCLEOTIDE SEQUENCE [MRNA]</scope>
    <source>
        <strain>cv. Sparkle</strain>
        <tissue>Root nodule</tissue>
    </source>
</reference>